<sequence length="230" mass="25930">MDSNTVSSFQVDCFLWHVRKRFADQELGDAPFLDRLRRDQKSLRGRGSTLGLDIGTATRAGKQIVERILEEESDEALKMTIASVPASRYLTDMTLEEMSRDWFMLMPKQTVAGSLCIRMDQAIMDKNIILKANFSVTFDRLETLILLRAFTEEGAIVGEISPLPSLPGHTDEDVKNAIGGLIGGLEWNDNTVRVSETLQRFAWRSSNEDGRPPLPPKQKRKMARTIESEV</sequence>
<protein>
    <recommendedName>
        <fullName evidence="1">Non-structural protein 1</fullName>
        <shortName evidence="1">NS1</shortName>
    </recommendedName>
    <alternativeName>
        <fullName evidence="1">NS1A</fullName>
    </alternativeName>
</protein>
<keyword id="KW-0025">Alternative splicing</keyword>
<keyword id="KW-1262">Eukaryotic host gene expression shutoff by virus</keyword>
<keyword id="KW-1035">Host cytoplasm</keyword>
<keyword id="KW-1190">Host gene expression shutoff by virus</keyword>
<keyword id="KW-1192">Host mRNA suppression by virus</keyword>
<keyword id="KW-1048">Host nucleus</keyword>
<keyword id="KW-0945">Host-virus interaction</keyword>
<keyword id="KW-1090">Inhibition of host innate immune response by virus</keyword>
<keyword id="KW-1114">Inhibition of host interferon signaling pathway by virus</keyword>
<keyword id="KW-1102">Inhibition of host PKR by virus</keyword>
<keyword id="KW-1103">Inhibition of host pre-mRNA processing by virus</keyword>
<keyword id="KW-1088">Inhibition of host RIG-I by virus</keyword>
<keyword id="KW-1113">Inhibition of host RLR pathway by virus</keyword>
<keyword id="KW-0922">Interferon antiviral system evasion</keyword>
<keyword id="KW-0694">RNA-binding</keyword>
<keyword id="KW-0832">Ubl conjugation</keyword>
<keyword id="KW-0899">Viral immunoevasion</keyword>
<feature type="chain" id="PRO_0000324242" description="Non-structural protein 1">
    <location>
        <begin position="1"/>
        <end position="230"/>
    </location>
</feature>
<feature type="region of interest" description="RNA-binding and homodimerization" evidence="1">
    <location>
        <begin position="1"/>
        <end position="73"/>
    </location>
</feature>
<feature type="region of interest" description="CPSF4-binding" evidence="1">
    <location>
        <begin position="180"/>
        <end position="215"/>
    </location>
</feature>
<feature type="region of interest" description="Disordered" evidence="2">
    <location>
        <begin position="204"/>
        <end position="230"/>
    </location>
</feature>
<feature type="region of interest" description="PABPN1-binding" evidence="1">
    <location>
        <begin position="223"/>
        <end position="230"/>
    </location>
</feature>
<feature type="short sequence motif" description="Nuclear localization signal" evidence="1">
    <location>
        <begin position="34"/>
        <end position="38"/>
    </location>
</feature>
<feature type="short sequence motif" description="Nuclear export signal" evidence="1">
    <location>
        <begin position="137"/>
        <end position="146"/>
    </location>
</feature>
<feature type="sequence conflict" description="In Ref. 2; ABI85141." ref="2">
    <original>T</original>
    <variation>K</variation>
    <location>
        <position position="110"/>
    </location>
</feature>
<accession>O41647</accession>
<accession>Q0A2E0</accession>
<comment type="function">
    <text evidence="1">Inhibits post-transcriptional processing of cellular pre-mRNA, by binding and inhibiting two cellular proteins that are required for the 3'-end processing of cellular pre-mRNAs: the 30 kDa cleavage and polyadenylation specificity factor/CPSF4 and the poly(A)-binding protein 2/PABPN1. In turn, unprocessed 3' end pre-mRNAs accumulate in the host nucleus and are no longer exported to the cytoplasm. Cellular protein synthesis is thereby shut off very early after virus infection. Viral protein synthesis is not affected by the inhibition of the cellular 3' end processing machinery because the poly(A) tails of viral mRNAs are produced by the viral polymerase through a stuttering mechanism. Prevents the establishment of the cellular antiviral state by inhibiting TRIM25-mediated RIGI ubiquitination, which normally triggers the antiviral transduction signal that leads to the activation of type I IFN genes by transcription factors IRF3 and IRF7. Also binds poly(A) and U6 snRNA. Inhibits the integrated stress response (ISR) in the infected cell by blocking dsRNA binding by EIF2AK2/PKR and further phosphorylation of EIF2S1/EIF-2ALPHA. Stress granule formation is thus inhibited, which allows protein synthesis and viral replication.</text>
</comment>
<comment type="subunit">
    <text evidence="1">Homodimer. Interacts with host TRIM25 (via coiled coil); this interaction specifically inhibits TRIM25 multimerization and TRIM25-mediated RIGI CARD ubiquitination. Interacts with human EIF2AK2/PKR, CPSF4, IVNS1ABP and PABPN1.</text>
</comment>
<comment type="subcellular location">
    <subcellularLocation>
        <location evidence="1">Host nucleus</location>
    </subcellularLocation>
    <subcellularLocation>
        <location evidence="1">Host cytoplasm</location>
    </subcellularLocation>
    <text evidence="1">In uninfected, transfected cells, NS1 is localized in the nucleus. Only in virus infected cells, the nuclear export signal is unveiled, presumably by a viral protein, and a fraction of NS1 is exported in the cytoplasm.</text>
</comment>
<comment type="alternative products">
    <event type="alternative splicing"/>
    <isoform>
        <id>O41647-1</id>
        <name>NS1</name>
        <sequence type="displayed"/>
    </isoform>
    <isoform>
        <id>O41648-1</id>
        <name>NEP</name>
        <name>NS2</name>
        <sequence type="external"/>
    </isoform>
</comment>
<comment type="domain">
    <text evidence="1">The dsRNA-binding region is required for suppression of RNA silencing.</text>
</comment>
<comment type="PTM">
    <text evidence="1">Upon interferon induction, ISGylated via host HERC5; this results in the impairment of NS1 interaction with RNA targets due to its inability to form homodimers and to interact with host EIF2AK2/PKR.</text>
</comment>
<comment type="similarity">
    <text evidence="1">Belongs to the influenza A viruses NS1 family.</text>
</comment>
<organismHost>
    <name type="scientific">Aves</name>
    <dbReference type="NCBI Taxonomy" id="8782"/>
</organismHost>
<reference key="1">
    <citation type="journal article" date="1997" name="Virus Res.">
        <title>Evolution of H5 subtype avian influenza A viruses in North America.</title>
        <authorList>
            <person name="Garcia M."/>
            <person name="Suarez D.L."/>
            <person name="Crawford J.M."/>
            <person name="Latimer J.W."/>
            <person name="Slemons R.D."/>
            <person name="Swayne D.E."/>
            <person name="Purdue M.L."/>
        </authorList>
    </citation>
    <scope>NUCLEOTIDE SEQUENCE [GENOMIC RNA]</scope>
</reference>
<reference key="2">
    <citation type="journal article" date="2006" name="Science">
        <title>Large-scale sequence analysis of avian influenza isolates.</title>
        <authorList>
            <person name="Obenauer J.C."/>
            <person name="Denson J."/>
            <person name="Mehta P.K."/>
            <person name="Su X."/>
            <person name="Mukatira S."/>
            <person name="Finkelstein D.B."/>
            <person name="Xu X."/>
            <person name="Wang J."/>
            <person name="Ma J."/>
            <person name="Fan Y."/>
            <person name="Rakestraw K.M."/>
            <person name="Webster R.G."/>
            <person name="Hoffmann E."/>
            <person name="Krauss S."/>
            <person name="Zheng J."/>
            <person name="Zhang Z."/>
            <person name="Naeve C.W."/>
        </authorList>
    </citation>
    <scope>NUCLEOTIDE SEQUENCE [GENOMIC RNA]</scope>
</reference>
<organism>
    <name type="scientific">Influenza A virus (strain A/Turkey/Ontario/7732/1966 H5N9)</name>
    <dbReference type="NCBI Taxonomy" id="380301"/>
    <lineage>
        <taxon>Viruses</taxon>
        <taxon>Riboviria</taxon>
        <taxon>Orthornavirae</taxon>
        <taxon>Negarnaviricota</taxon>
        <taxon>Polyploviricotina</taxon>
        <taxon>Insthoviricetes</taxon>
        <taxon>Articulavirales</taxon>
        <taxon>Orthomyxoviridae</taxon>
        <taxon>Alphainfluenzavirus</taxon>
        <taxon>Alphainfluenzavirus influenzae</taxon>
        <taxon>Influenza A virus</taxon>
    </lineage>
</organism>
<proteinExistence type="inferred from homology"/>
<dbReference type="EMBL" id="U85376">
    <property type="protein sequence ID" value="AAC40653.1"/>
    <property type="molecule type" value="Genomic_RNA"/>
</dbReference>
<dbReference type="EMBL" id="CY015106">
    <property type="protein sequence ID" value="ABI85141.1"/>
    <property type="molecule type" value="Genomic_RNA"/>
</dbReference>
<dbReference type="SMR" id="O41647"/>
<dbReference type="GO" id="GO:0030430">
    <property type="term" value="C:host cell cytoplasm"/>
    <property type="evidence" value="ECO:0007669"/>
    <property type="project" value="UniProtKB-SubCell"/>
</dbReference>
<dbReference type="GO" id="GO:0042025">
    <property type="term" value="C:host cell nucleus"/>
    <property type="evidence" value="ECO:0007669"/>
    <property type="project" value="UniProtKB-SubCell"/>
</dbReference>
<dbReference type="GO" id="GO:0030291">
    <property type="term" value="F:protein serine/threonine kinase inhibitor activity"/>
    <property type="evidence" value="ECO:0007669"/>
    <property type="project" value="UniProtKB-KW"/>
</dbReference>
<dbReference type="GO" id="GO:0003723">
    <property type="term" value="F:RNA binding"/>
    <property type="evidence" value="ECO:0007669"/>
    <property type="project" value="UniProtKB-KW"/>
</dbReference>
<dbReference type="GO" id="GO:0039540">
    <property type="term" value="P:symbiont-mediated suppression of host cytoplasmic pattern recognition receptor signaling pathway via inhibition of RIG-I activity"/>
    <property type="evidence" value="ECO:0007669"/>
    <property type="project" value="UniProtKB-KW"/>
</dbReference>
<dbReference type="GO" id="GO:0039657">
    <property type="term" value="P:symbiont-mediated suppression of host gene expression"/>
    <property type="evidence" value="ECO:0007669"/>
    <property type="project" value="UniProtKB-KW"/>
</dbReference>
<dbReference type="GO" id="GO:0039524">
    <property type="term" value="P:symbiont-mediated suppression of host mRNA processing"/>
    <property type="evidence" value="ECO:0007669"/>
    <property type="project" value="UniProtKB-KW"/>
</dbReference>
<dbReference type="GO" id="GO:0039580">
    <property type="term" value="P:symbiont-mediated suppression of host PKR/eIFalpha signaling"/>
    <property type="evidence" value="ECO:0007669"/>
    <property type="project" value="UniProtKB-KW"/>
</dbReference>
<dbReference type="GO" id="GO:0039502">
    <property type="term" value="P:symbiont-mediated suppression of host type I interferon-mediated signaling pathway"/>
    <property type="evidence" value="ECO:0007669"/>
    <property type="project" value="UniProtKB-KW"/>
</dbReference>
<dbReference type="FunFam" id="1.10.287.10:FF:000001">
    <property type="entry name" value="Non-structural protein 1"/>
    <property type="match status" value="1"/>
</dbReference>
<dbReference type="FunFam" id="3.30.420.330:FF:000001">
    <property type="entry name" value="Non-structural protein 1"/>
    <property type="match status" value="1"/>
</dbReference>
<dbReference type="Gene3D" id="3.30.420.330">
    <property type="entry name" value="Influenza virus non-structural protein, effector domain"/>
    <property type="match status" value="1"/>
</dbReference>
<dbReference type="Gene3D" id="1.10.287.10">
    <property type="entry name" value="S15/NS1, RNA-binding"/>
    <property type="match status" value="1"/>
</dbReference>
<dbReference type="HAMAP" id="MF_04066">
    <property type="entry name" value="INFV_NS1"/>
    <property type="match status" value="1"/>
</dbReference>
<dbReference type="InterPro" id="IPR004208">
    <property type="entry name" value="NS1"/>
</dbReference>
<dbReference type="InterPro" id="IPR000256">
    <property type="entry name" value="NS1A"/>
</dbReference>
<dbReference type="InterPro" id="IPR038064">
    <property type="entry name" value="NS1A_effect_dom-like_sf"/>
</dbReference>
<dbReference type="InterPro" id="IPR009068">
    <property type="entry name" value="uS15_NS1_RNA-bd_sf"/>
</dbReference>
<dbReference type="Pfam" id="PF00600">
    <property type="entry name" value="Flu_NS1"/>
    <property type="match status" value="1"/>
</dbReference>
<dbReference type="SUPFAM" id="SSF143021">
    <property type="entry name" value="Ns1 effector domain-like"/>
    <property type="match status" value="1"/>
</dbReference>
<dbReference type="SUPFAM" id="SSF47060">
    <property type="entry name" value="S15/NS1 RNA-binding domain"/>
    <property type="match status" value="1"/>
</dbReference>
<name>NS1_I66A0</name>
<evidence type="ECO:0000255" key="1">
    <source>
        <dbReference type="HAMAP-Rule" id="MF_04066"/>
    </source>
</evidence>
<evidence type="ECO:0000256" key="2">
    <source>
        <dbReference type="SAM" id="MobiDB-lite"/>
    </source>
</evidence>
<gene>
    <name evidence="1" type="primary">NS</name>
</gene>